<protein>
    <recommendedName>
        <fullName>NADH-quinone oxidoreductase subunit 6</fullName>
        <ecNumber>7.1.1.-</ecNumber>
    </recommendedName>
    <alternativeName>
        <fullName>NADH dehydrogenase I subunit 6</fullName>
    </alternativeName>
    <alternativeName>
        <fullName>NDH-1 subunit 6</fullName>
    </alternativeName>
</protein>
<comment type="function">
    <text evidence="1 2">NDH-1 shuttles electrons from NADH, via FMN and iron-sulfur (Fe-S) centers, to quinones in the respiratory chain. The immediate electron acceptor for the enzyme in this species is menaquinone. Couples the redox reaction to proton translocation (for every two electrons transferred, four hydrogen ions are translocated across the cytoplasmic membrane), and thus conserves the redox energy in a proton gradient required for the synthesis of ATP.</text>
</comment>
<comment type="catalytic activity">
    <reaction>
        <text>a quinone + NADH + 5 H(+)(in) = a quinol + NAD(+) + 4 H(+)(out)</text>
        <dbReference type="Rhea" id="RHEA:57888"/>
        <dbReference type="ChEBI" id="CHEBI:15378"/>
        <dbReference type="ChEBI" id="CHEBI:24646"/>
        <dbReference type="ChEBI" id="CHEBI:57540"/>
        <dbReference type="ChEBI" id="CHEBI:57945"/>
        <dbReference type="ChEBI" id="CHEBI:132124"/>
    </reaction>
</comment>
<comment type="cofactor">
    <cofactor evidence="1">
        <name>[4Fe-4S] cluster</name>
        <dbReference type="ChEBI" id="CHEBI:49883"/>
    </cofactor>
    <text evidence="1">Binds 1 [4Fe-4S] cluster per subunit. This [4Fe-4S] cluster is referred to as N2.</text>
</comment>
<comment type="subunit">
    <text evidence="1 2">NDH-1 is composed of 15 different subunits, Nqo1 to Nqo15. The complex has a L-shaped structure, with the hydrophobic arm (subunits Nqo7, Nqo8 and Nqo10 to Nqo14) embedded in the membrane and the hydrophilic peripheral arm (subunits Nqo1 to Nqo6, Nqo9 and Nqo15) protruding into the bacterial cytoplasm. The hydrophilic domain contains all the redox centers. This subunit interacts extensively with Nqo4.</text>
</comment>
<comment type="subcellular location">
    <subcellularLocation>
        <location evidence="4">Cell membrane</location>
        <topology evidence="4">Peripheral membrane protein</topology>
        <orientation evidence="4">Cytoplasmic side</orientation>
    </subcellularLocation>
</comment>
<comment type="similarity">
    <text evidence="3">Belongs to the complex I 20 kDa subunit family.</text>
</comment>
<evidence type="ECO:0000269" key="1">
    <source>
    </source>
</evidence>
<evidence type="ECO:0000269" key="2">
    <source>
    </source>
</evidence>
<evidence type="ECO:0000305" key="3"/>
<evidence type="ECO:0000305" key="4">
    <source>
    </source>
</evidence>
<evidence type="ECO:0007829" key="5">
    <source>
        <dbReference type="PDB" id="2FUG"/>
    </source>
</evidence>
<evidence type="ECO:0007829" key="6">
    <source>
        <dbReference type="PDB" id="3I9V"/>
    </source>
</evidence>
<evidence type="ECO:0007829" key="7">
    <source>
        <dbReference type="PDB" id="3IAM"/>
    </source>
</evidence>
<evidence type="ECO:0007829" key="8">
    <source>
        <dbReference type="PDB" id="6Y11"/>
    </source>
</evidence>
<proteinExistence type="evidence at protein level"/>
<sequence>MALKDLFERDVQELEREGILFTTLEKLVAWGRSNSLWPATFGLACCAIEMMASTDARNDLARFGSEVFRASPRQADVMIVAGRLSKKMAPVMRRVWEQMPDPKWVISMGACASSGGMFNNYAIVQNVDSVVPVDVYVPGCPPRPEALIYAVMQLQKKVRGQAYNERGERLPPVAAWKRTRG</sequence>
<gene>
    <name type="primary">nqo6</name>
    <name type="ordered locus">TTHA0085</name>
</gene>
<name>NQO6_THET8</name>
<keyword id="KW-0002">3D-structure</keyword>
<keyword id="KW-0004">4Fe-4S</keyword>
<keyword id="KW-1003">Cell membrane</keyword>
<keyword id="KW-0903">Direct protein sequencing</keyword>
<keyword id="KW-0408">Iron</keyword>
<keyword id="KW-0411">Iron-sulfur</keyword>
<keyword id="KW-0472">Membrane</keyword>
<keyword id="KW-0479">Metal-binding</keyword>
<keyword id="KW-0520">NAD</keyword>
<keyword id="KW-0874">Quinone</keyword>
<keyword id="KW-1185">Reference proteome</keyword>
<keyword id="KW-1278">Translocase</keyword>
<reference key="1">
    <citation type="journal article" date="1997" name="J. Biol. Chem.">
        <title>The proton-translocating NADH-quinone oxidoreductase (NDH-1) of thermophilic bacterium Thermus thermophilus HB-8. Complete DNA sequence of the gene cluster and thermostable properties of the expressed NQO2 subunit.</title>
        <authorList>
            <person name="Yano T."/>
            <person name="Chu S.S."/>
            <person name="Sled' V.D."/>
            <person name="Ohnishi T."/>
            <person name="Yagi T."/>
        </authorList>
    </citation>
    <scope>NUCLEOTIDE SEQUENCE [GENOMIC DNA]</scope>
    <source>
        <strain>ATCC 27634 / DSM 579 / HB8</strain>
    </source>
</reference>
<reference key="2">
    <citation type="submission" date="2004-11" db="EMBL/GenBank/DDBJ databases">
        <title>Complete genome sequence of Thermus thermophilus HB8.</title>
        <authorList>
            <person name="Masui R."/>
            <person name="Kurokawa K."/>
            <person name="Nakagawa N."/>
            <person name="Tokunaga F."/>
            <person name="Koyama Y."/>
            <person name="Shibata T."/>
            <person name="Oshima T."/>
            <person name="Yokoyama S."/>
            <person name="Yasunaga T."/>
            <person name="Kuramitsu S."/>
        </authorList>
    </citation>
    <scope>NUCLEOTIDE SEQUENCE [LARGE SCALE GENOMIC DNA]</scope>
    <source>
        <strain>ATCC 27634 / DSM 579 / HB8</strain>
    </source>
</reference>
<reference key="3">
    <citation type="journal article" date="2006" name="Biochemistry">
        <title>Identification of a novel subunit of respiratory complex I from Thermus thermophilus.</title>
        <authorList>
            <person name="Hinchliffe P."/>
            <person name="Carroll J."/>
            <person name="Sazanov L.A."/>
        </authorList>
    </citation>
    <scope>PROTEIN SEQUENCE OF 2-9</scope>
    <scope>IDENTIFICATION BY MASS SPECTROMETRY</scope>
    <scope>FUNCTION</scope>
    <scope>EPR SPECTROSCOPY</scope>
    <scope>SUBUNIT</scope>
    <source>
        <strain>ATCC 27634 / DSM 579 / HB8</strain>
    </source>
</reference>
<reference key="4">
    <citation type="journal article" date="2006" name="Science">
        <title>Structure of the hydrophilic domain of respiratory complex I from Thermus thermophilus.</title>
        <authorList>
            <person name="Sazanov L.A."/>
            <person name="Hinchliffe P."/>
        </authorList>
    </citation>
    <scope>X-RAY CRYSTALLOGRAPHY (3.3 ANGSTROMS) OF ENZYME HYDROPHILIC DOMAIN IN COMPLEX WITH 4FE-4S CLUSTER</scope>
    <scope>FUNCTION</scope>
    <scope>SUBUNIT</scope>
    <scope>SUBCELLULAR LOCATION</scope>
    <scope>ELECTRON TRANSFER MECHANISM</scope>
</reference>
<dbReference type="EC" id="7.1.1.-"/>
<dbReference type="EMBL" id="U52917">
    <property type="protein sequence ID" value="AAA97939.1"/>
    <property type="molecule type" value="Genomic_DNA"/>
</dbReference>
<dbReference type="EMBL" id="AP008226">
    <property type="protein sequence ID" value="BAD69908.1"/>
    <property type="molecule type" value="Genomic_DNA"/>
</dbReference>
<dbReference type="PIR" id="T11899">
    <property type="entry name" value="T11899"/>
</dbReference>
<dbReference type="RefSeq" id="WP_011174271.1">
    <property type="nucleotide sequence ID" value="NC_006461.1"/>
</dbReference>
<dbReference type="RefSeq" id="YP_143351.1">
    <property type="nucleotide sequence ID" value="NC_006461.1"/>
</dbReference>
<dbReference type="PDB" id="2FUG">
    <property type="method" value="X-ray"/>
    <property type="resolution" value="3.30 A"/>
    <property type="chains" value="6/F/O/X=1-181"/>
</dbReference>
<dbReference type="PDB" id="2YBB">
    <property type="method" value="EM"/>
    <property type="resolution" value="19.00 A"/>
    <property type="chains" value="6=1-181"/>
</dbReference>
<dbReference type="PDB" id="3I9V">
    <property type="method" value="X-ray"/>
    <property type="resolution" value="3.10 A"/>
    <property type="chains" value="6/F=1-181"/>
</dbReference>
<dbReference type="PDB" id="3IAM">
    <property type="method" value="X-ray"/>
    <property type="resolution" value="3.10 A"/>
    <property type="chains" value="6/F=1-181"/>
</dbReference>
<dbReference type="PDB" id="3IAS">
    <property type="method" value="X-ray"/>
    <property type="resolution" value="3.15 A"/>
    <property type="chains" value="6/F/O/X=1-181"/>
</dbReference>
<dbReference type="PDB" id="3M9S">
    <property type="method" value="X-ray"/>
    <property type="resolution" value="4.50 A"/>
    <property type="chains" value="6/F=1-181"/>
</dbReference>
<dbReference type="PDB" id="4HEA">
    <property type="method" value="X-ray"/>
    <property type="resolution" value="3.30 A"/>
    <property type="chains" value="6/G=1-181"/>
</dbReference>
<dbReference type="PDB" id="6I0D">
    <property type="method" value="X-ray"/>
    <property type="resolution" value="3.60 A"/>
    <property type="chains" value="6/G=1-181"/>
</dbReference>
<dbReference type="PDB" id="6I1P">
    <property type="method" value="X-ray"/>
    <property type="resolution" value="3.21 A"/>
    <property type="chains" value="6/G=1-181"/>
</dbReference>
<dbReference type="PDB" id="6Q8O">
    <property type="method" value="X-ray"/>
    <property type="resolution" value="3.60 A"/>
    <property type="chains" value="6/G=1-181"/>
</dbReference>
<dbReference type="PDB" id="6Q8W">
    <property type="method" value="X-ray"/>
    <property type="resolution" value="3.40 A"/>
    <property type="chains" value="6/G=1-181"/>
</dbReference>
<dbReference type="PDB" id="6Q8X">
    <property type="method" value="X-ray"/>
    <property type="resolution" value="3.51 A"/>
    <property type="chains" value="6/G=1-181"/>
</dbReference>
<dbReference type="PDB" id="6Y11">
    <property type="method" value="X-ray"/>
    <property type="resolution" value="3.11 A"/>
    <property type="chains" value="6/G=1-181"/>
</dbReference>
<dbReference type="PDB" id="6ZIY">
    <property type="method" value="EM"/>
    <property type="resolution" value="4.25 A"/>
    <property type="chains" value="6=1-181"/>
</dbReference>
<dbReference type="PDB" id="6ZJL">
    <property type="method" value="EM"/>
    <property type="resolution" value="4.30 A"/>
    <property type="chains" value="6=1-181"/>
</dbReference>
<dbReference type="PDB" id="6ZJN">
    <property type="method" value="EM"/>
    <property type="resolution" value="6.10 A"/>
    <property type="chains" value="6=1-181"/>
</dbReference>
<dbReference type="PDB" id="6ZJY">
    <property type="method" value="EM"/>
    <property type="resolution" value="5.50 A"/>
    <property type="chains" value="6=1-181"/>
</dbReference>
<dbReference type="PDBsum" id="2FUG"/>
<dbReference type="PDBsum" id="2YBB"/>
<dbReference type="PDBsum" id="3I9V"/>
<dbReference type="PDBsum" id="3IAM"/>
<dbReference type="PDBsum" id="3IAS"/>
<dbReference type="PDBsum" id="3M9S"/>
<dbReference type="PDBsum" id="4HEA"/>
<dbReference type="PDBsum" id="6I0D"/>
<dbReference type="PDBsum" id="6I1P"/>
<dbReference type="PDBsum" id="6Q8O"/>
<dbReference type="PDBsum" id="6Q8W"/>
<dbReference type="PDBsum" id="6Q8X"/>
<dbReference type="PDBsum" id="6Y11"/>
<dbReference type="PDBsum" id="6ZIY"/>
<dbReference type="PDBsum" id="6ZJL"/>
<dbReference type="PDBsum" id="6ZJN"/>
<dbReference type="PDBsum" id="6ZJY"/>
<dbReference type="EMDB" id="EMD-11231"/>
<dbReference type="EMDB" id="EMD-11235"/>
<dbReference type="EMDB" id="EMD-11237"/>
<dbReference type="EMDB" id="EMD-11238"/>
<dbReference type="EMDB" id="EMD-1876"/>
<dbReference type="SMR" id="Q56218"/>
<dbReference type="DIP" id="DIP-59264N"/>
<dbReference type="IntAct" id="Q56218">
    <property type="interactions" value="1"/>
</dbReference>
<dbReference type="TCDB" id="3.D.1.3.1">
    <property type="family name" value="the h+ or na+-translocating nadh dehydrogenase (ndh) family"/>
</dbReference>
<dbReference type="EnsemblBacteria" id="BAD69908">
    <property type="protein sequence ID" value="BAD69908"/>
    <property type="gene ID" value="BAD69908"/>
</dbReference>
<dbReference type="GeneID" id="3168381"/>
<dbReference type="KEGG" id="ttj:TTHA0085"/>
<dbReference type="PATRIC" id="fig|300852.9.peg.83"/>
<dbReference type="eggNOG" id="COG0377">
    <property type="taxonomic scope" value="Bacteria"/>
</dbReference>
<dbReference type="HOGENOM" id="CLU_055737_7_3_0"/>
<dbReference type="PhylomeDB" id="Q56218"/>
<dbReference type="EvolutionaryTrace" id="Q56218"/>
<dbReference type="Proteomes" id="UP000000532">
    <property type="component" value="Chromosome"/>
</dbReference>
<dbReference type="GO" id="GO:0005886">
    <property type="term" value="C:plasma membrane"/>
    <property type="evidence" value="ECO:0007669"/>
    <property type="project" value="UniProtKB-SubCell"/>
</dbReference>
<dbReference type="GO" id="GO:0045271">
    <property type="term" value="C:respiratory chain complex I"/>
    <property type="evidence" value="ECO:0007669"/>
    <property type="project" value="TreeGrafter"/>
</dbReference>
<dbReference type="GO" id="GO:0051539">
    <property type="term" value="F:4 iron, 4 sulfur cluster binding"/>
    <property type="evidence" value="ECO:0007669"/>
    <property type="project" value="UniProtKB-KW"/>
</dbReference>
<dbReference type="GO" id="GO:0005506">
    <property type="term" value="F:iron ion binding"/>
    <property type="evidence" value="ECO:0007669"/>
    <property type="project" value="UniProtKB-UniRule"/>
</dbReference>
<dbReference type="GO" id="GO:0008137">
    <property type="term" value="F:NADH dehydrogenase (ubiquinone) activity"/>
    <property type="evidence" value="ECO:0007669"/>
    <property type="project" value="InterPro"/>
</dbReference>
<dbReference type="GO" id="GO:0050136">
    <property type="term" value="F:NADH:ubiquinone reductase (non-electrogenic) activity"/>
    <property type="evidence" value="ECO:0007669"/>
    <property type="project" value="UniProtKB-UniRule"/>
</dbReference>
<dbReference type="GO" id="GO:0048038">
    <property type="term" value="F:quinone binding"/>
    <property type="evidence" value="ECO:0007669"/>
    <property type="project" value="UniProtKB-KW"/>
</dbReference>
<dbReference type="GO" id="GO:0009060">
    <property type="term" value="P:aerobic respiration"/>
    <property type="evidence" value="ECO:0007669"/>
    <property type="project" value="TreeGrafter"/>
</dbReference>
<dbReference type="GO" id="GO:0015990">
    <property type="term" value="P:electron transport coupled proton transport"/>
    <property type="evidence" value="ECO:0007669"/>
    <property type="project" value="TreeGrafter"/>
</dbReference>
<dbReference type="FunFam" id="3.40.50.12280:FF:000004">
    <property type="entry name" value="NADH-quinone oxidoreductase subunit B"/>
    <property type="match status" value="1"/>
</dbReference>
<dbReference type="Gene3D" id="3.40.50.12280">
    <property type="match status" value="1"/>
</dbReference>
<dbReference type="HAMAP" id="MF_01356">
    <property type="entry name" value="NDH1_NuoB"/>
    <property type="match status" value="1"/>
</dbReference>
<dbReference type="InterPro" id="IPR006137">
    <property type="entry name" value="NADH_UbQ_OxRdtase-like_20kDa"/>
</dbReference>
<dbReference type="InterPro" id="IPR006138">
    <property type="entry name" value="NADH_UQ_OxRdtase_20Kd_su"/>
</dbReference>
<dbReference type="NCBIfam" id="TIGR01957">
    <property type="entry name" value="nuoB_fam"/>
    <property type="match status" value="1"/>
</dbReference>
<dbReference type="NCBIfam" id="NF005012">
    <property type="entry name" value="PRK06411.1"/>
    <property type="match status" value="1"/>
</dbReference>
<dbReference type="PANTHER" id="PTHR11995">
    <property type="entry name" value="NADH DEHYDROGENASE"/>
    <property type="match status" value="1"/>
</dbReference>
<dbReference type="PANTHER" id="PTHR11995:SF14">
    <property type="entry name" value="NADH DEHYDROGENASE [UBIQUINONE] IRON-SULFUR PROTEIN 7, MITOCHONDRIAL"/>
    <property type="match status" value="1"/>
</dbReference>
<dbReference type="Pfam" id="PF01058">
    <property type="entry name" value="Oxidored_q6"/>
    <property type="match status" value="1"/>
</dbReference>
<dbReference type="SUPFAM" id="SSF56770">
    <property type="entry name" value="HydA/Nqo6-like"/>
    <property type="match status" value="1"/>
</dbReference>
<dbReference type="PROSITE" id="PS01150">
    <property type="entry name" value="COMPLEX1_20K"/>
    <property type="match status" value="1"/>
</dbReference>
<feature type="initiator methionine" description="Removed" evidence="2">
    <location>
        <position position="1"/>
    </location>
</feature>
<feature type="chain" id="PRO_0000118763" description="NADH-quinone oxidoreductase subunit 6">
    <location>
        <begin position="2"/>
        <end position="181"/>
    </location>
</feature>
<feature type="binding site" evidence="1">
    <location>
        <position position="45"/>
    </location>
    <ligand>
        <name>[4Fe-4S] cluster</name>
        <dbReference type="ChEBI" id="CHEBI:49883"/>
    </ligand>
</feature>
<feature type="binding site" evidence="1">
    <location>
        <position position="46"/>
    </location>
    <ligand>
        <name>[4Fe-4S] cluster</name>
        <dbReference type="ChEBI" id="CHEBI:49883"/>
    </ligand>
</feature>
<feature type="binding site" evidence="1">
    <location>
        <position position="111"/>
    </location>
    <ligand>
        <name>[4Fe-4S] cluster</name>
        <dbReference type="ChEBI" id="CHEBI:49883"/>
    </ligand>
</feature>
<feature type="binding site" evidence="1">
    <location>
        <position position="140"/>
    </location>
    <ligand>
        <name>[4Fe-4S] cluster</name>
        <dbReference type="ChEBI" id="CHEBI:49883"/>
    </ligand>
</feature>
<feature type="helix" evidence="6">
    <location>
        <begin position="19"/>
        <end position="32"/>
    </location>
</feature>
<feature type="strand" evidence="6">
    <location>
        <begin position="39"/>
        <end position="42"/>
    </location>
</feature>
<feature type="helix" evidence="6">
    <location>
        <begin position="46"/>
        <end position="50"/>
    </location>
</feature>
<feature type="turn" evidence="6">
    <location>
        <begin position="51"/>
        <end position="56"/>
    </location>
</feature>
<feature type="strand" evidence="8">
    <location>
        <begin position="62"/>
        <end position="64"/>
    </location>
</feature>
<feature type="helix" evidence="8">
    <location>
        <begin position="72"/>
        <end position="74"/>
    </location>
</feature>
<feature type="strand" evidence="6">
    <location>
        <begin position="78"/>
        <end position="82"/>
    </location>
</feature>
<feature type="turn" evidence="6">
    <location>
        <begin position="86"/>
        <end position="88"/>
    </location>
</feature>
<feature type="helix" evidence="6">
    <location>
        <begin position="89"/>
        <end position="97"/>
    </location>
</feature>
<feature type="strand" evidence="6">
    <location>
        <begin position="105"/>
        <end position="108"/>
    </location>
</feature>
<feature type="helix" evidence="6">
    <location>
        <begin position="109"/>
        <end position="113"/>
    </location>
</feature>
<feature type="strand" evidence="7">
    <location>
        <begin position="120"/>
        <end position="123"/>
    </location>
</feature>
<feature type="helix" evidence="6">
    <location>
        <begin position="127"/>
        <end position="129"/>
    </location>
</feature>
<feature type="strand" evidence="6">
    <location>
        <begin position="134"/>
        <end position="137"/>
    </location>
</feature>
<feature type="strand" evidence="7">
    <location>
        <begin position="139"/>
        <end position="141"/>
    </location>
</feature>
<feature type="helix" evidence="6">
    <location>
        <begin position="144"/>
        <end position="158"/>
    </location>
</feature>
<feature type="strand" evidence="5">
    <location>
        <begin position="159"/>
        <end position="161"/>
    </location>
</feature>
<feature type="strand" evidence="5">
    <location>
        <begin position="165"/>
        <end position="167"/>
    </location>
</feature>
<feature type="strand" evidence="8">
    <location>
        <begin position="176"/>
        <end position="178"/>
    </location>
</feature>
<accession>Q56218</accession>
<accession>Q5SM58</accession>
<organism>
    <name type="scientific">Thermus thermophilus (strain ATCC 27634 / DSM 579 / HB8)</name>
    <dbReference type="NCBI Taxonomy" id="300852"/>
    <lineage>
        <taxon>Bacteria</taxon>
        <taxon>Thermotogati</taxon>
        <taxon>Deinococcota</taxon>
        <taxon>Deinococci</taxon>
        <taxon>Thermales</taxon>
        <taxon>Thermaceae</taxon>
        <taxon>Thermus</taxon>
    </lineage>
</organism>